<protein>
    <recommendedName>
        <fullName>Uncharacterized ORF2/4 protein</fullName>
    </recommendedName>
</protein>
<feature type="chain" id="PRO_0000315344" description="Uncharacterized ORF2/4 protein">
    <location>
        <begin position="1"/>
        <end position="266"/>
    </location>
</feature>
<feature type="region of interest" description="Disordered" evidence="1">
    <location>
        <begin position="50"/>
        <end position="116"/>
    </location>
</feature>
<feature type="region of interest" description="Disordered" evidence="1">
    <location>
        <begin position="128"/>
        <end position="224"/>
    </location>
</feature>
<feature type="compositionally biased region" description="Pro residues" evidence="1">
    <location>
        <begin position="78"/>
        <end position="90"/>
    </location>
</feature>
<feature type="compositionally biased region" description="Gly residues" evidence="1">
    <location>
        <begin position="94"/>
        <end position="108"/>
    </location>
</feature>
<feature type="compositionally biased region" description="Basic and acidic residues" evidence="1">
    <location>
        <begin position="129"/>
        <end position="161"/>
    </location>
</feature>
<feature type="compositionally biased region" description="Low complexity" evidence="1">
    <location>
        <begin position="166"/>
        <end position="176"/>
    </location>
</feature>
<reference key="1">
    <citation type="journal article" date="2002" name="Arch. Virol.">
        <title>Analysis of the entire genomes of thirteen TT virus variants classifiable into the fourth and fifth genetic groups, isolated from viremic infants.</title>
        <authorList>
            <person name="Peng Y.H."/>
            <person name="Nishizawa T."/>
            <person name="Takahashi M."/>
            <person name="Ishikawa T."/>
            <person name="Yoshikawa A."/>
            <person name="Okamoto H."/>
        </authorList>
    </citation>
    <scope>NUCLEOTIDE SEQUENCE [GENOMIC DNA]</scope>
</reference>
<reference key="2">
    <citation type="journal article" date="2007" name="Rev. Med. Virol.">
        <title>Torque teno virus (TTV): current status.</title>
        <authorList>
            <person name="Hino S."/>
            <person name="Miyata H."/>
        </authorList>
    </citation>
    <scope>REVIEW</scope>
</reference>
<name>ORF24_TTVV7</name>
<proteinExistence type="predicted"/>
<accession>Q8V7G5</accession>
<dbReference type="EMBL" id="AB064604">
    <property type="protein sequence ID" value="BAB79343.1"/>
    <property type="molecule type" value="Genomic_DNA"/>
</dbReference>
<dbReference type="Proteomes" id="UP000008260">
    <property type="component" value="Genome"/>
</dbReference>
<dbReference type="InterPro" id="IPR004118">
    <property type="entry name" value="HEV_TT_vir_Orf2/Gyrovir_Vp2_N"/>
</dbReference>
<dbReference type="Pfam" id="PF02957">
    <property type="entry name" value="TT_ORF2-like"/>
    <property type="match status" value="1"/>
</dbReference>
<organismHost>
    <name type="scientific">Homo sapiens</name>
    <name type="common">Human</name>
    <dbReference type="NCBI Taxonomy" id="9606"/>
</organismHost>
<evidence type="ECO:0000256" key="1">
    <source>
        <dbReference type="SAM" id="MobiDB-lite"/>
    </source>
</evidence>
<gene>
    <name type="ORF">ORF2/4</name>
    <name type="ORF">ORF4</name>
</gene>
<organism>
    <name type="scientific">Torque teno virus (isolate Human/China/CT39F/2001)</name>
    <name type="common">TTV</name>
    <dbReference type="NCBI Taxonomy" id="486279"/>
    <lineage>
        <taxon>Viruses</taxon>
        <taxon>Viruses incertae sedis</taxon>
        <taxon>Anelloviridae</taxon>
        <taxon>Torque teno virus</taxon>
    </lineage>
</organism>
<keyword id="KW-1185">Reference proteome</keyword>
<sequence>MSIWRPPLHNVPGLEHLWYESVHRSHAAVCGCGDPVRHLTALAERYGIPGGSRSSGAPGVGGNHNPPQIRRARHPAAAPDPPAGNQPPALPWHGDGGNESGAGGGESGGPVADFADDGLDDLVAALDEEERRLQYPRETTKRTETVDERKRERSRSPRRDAGGLGPRAAPAAAPRAVSTPKRAQVPLRAVSQNPTGSPRRSLPRVGPEQWLLPERKPKPAPTSGDWAMEYLMCKIMNRPPRSQLTDPPFYPYCKNNYNVTFQLNYK</sequence>